<organism>
    <name type="scientific">Exiguobacterium sp. (strain ATCC BAA-1283 / AT1b)</name>
    <dbReference type="NCBI Taxonomy" id="360911"/>
    <lineage>
        <taxon>Bacteria</taxon>
        <taxon>Bacillati</taxon>
        <taxon>Bacillota</taxon>
        <taxon>Bacilli</taxon>
        <taxon>Bacillales</taxon>
        <taxon>Bacillales Family XII. Incertae Sedis</taxon>
        <taxon>Exiguobacterium</taxon>
    </lineage>
</organism>
<accession>C4KYQ8</accession>
<comment type="function">
    <text evidence="1">Channel that opens in response to stretch forces in the membrane lipid bilayer. May participate in the regulation of osmotic pressure changes within the cell.</text>
</comment>
<comment type="subunit">
    <text evidence="1">Homopentamer.</text>
</comment>
<comment type="subcellular location">
    <subcellularLocation>
        <location evidence="1">Cell membrane</location>
        <topology evidence="1">Multi-pass membrane protein</topology>
    </subcellularLocation>
</comment>
<comment type="similarity">
    <text evidence="1">Belongs to the MscL family.</text>
</comment>
<reference key="1">
    <citation type="journal article" date="2011" name="J. Bacteriol.">
        <title>Complete genome sequence of the Thermophilic Bacterium Exiguobacterium sp. AT1b.</title>
        <authorList>
            <person name="Vishnivetskaya T.A."/>
            <person name="Lucas S."/>
            <person name="Copeland A."/>
            <person name="Lapidus A."/>
            <person name="Glavina del Rio T."/>
            <person name="Dalin E."/>
            <person name="Tice H."/>
            <person name="Bruce D.C."/>
            <person name="Goodwin L.A."/>
            <person name="Pitluck S."/>
            <person name="Saunders E."/>
            <person name="Brettin T."/>
            <person name="Detter C."/>
            <person name="Han C."/>
            <person name="Larimer F."/>
            <person name="Land M.L."/>
            <person name="Hauser L.J."/>
            <person name="Kyrpides N.C."/>
            <person name="Ovchinnikova G."/>
            <person name="Kathariou S."/>
            <person name="Ramaley R.F."/>
            <person name="Rodrigues D.F."/>
            <person name="Hendrix C."/>
            <person name="Richardson P."/>
            <person name="Tiedje J.M."/>
        </authorList>
    </citation>
    <scope>NUCLEOTIDE SEQUENCE [LARGE SCALE GENOMIC DNA]</scope>
    <source>
        <strain>ATCC BAA-1283 / AT1b</strain>
    </source>
</reference>
<evidence type="ECO:0000255" key="1">
    <source>
        <dbReference type="HAMAP-Rule" id="MF_00115"/>
    </source>
</evidence>
<dbReference type="EMBL" id="CP001615">
    <property type="protein sequence ID" value="ACQ70221.1"/>
    <property type="molecule type" value="Genomic_DNA"/>
</dbReference>
<dbReference type="RefSeq" id="WP_012727340.1">
    <property type="nucleotide sequence ID" value="NC_012673.1"/>
</dbReference>
<dbReference type="SMR" id="C4KYQ8"/>
<dbReference type="STRING" id="360911.EAT1b_1294"/>
<dbReference type="KEGG" id="eat:EAT1b_1294"/>
<dbReference type="eggNOG" id="COG1970">
    <property type="taxonomic scope" value="Bacteria"/>
</dbReference>
<dbReference type="HOGENOM" id="CLU_095787_0_0_9"/>
<dbReference type="OrthoDB" id="9810350at2"/>
<dbReference type="Proteomes" id="UP000000716">
    <property type="component" value="Chromosome"/>
</dbReference>
<dbReference type="GO" id="GO:0005886">
    <property type="term" value="C:plasma membrane"/>
    <property type="evidence" value="ECO:0007669"/>
    <property type="project" value="UniProtKB-SubCell"/>
</dbReference>
<dbReference type="GO" id="GO:0008381">
    <property type="term" value="F:mechanosensitive monoatomic ion channel activity"/>
    <property type="evidence" value="ECO:0007669"/>
    <property type="project" value="UniProtKB-UniRule"/>
</dbReference>
<dbReference type="Gene3D" id="1.10.1200.120">
    <property type="entry name" value="Large-conductance mechanosensitive channel, MscL, domain 1"/>
    <property type="match status" value="1"/>
</dbReference>
<dbReference type="HAMAP" id="MF_00115">
    <property type="entry name" value="MscL"/>
    <property type="match status" value="1"/>
</dbReference>
<dbReference type="InterPro" id="IPR019823">
    <property type="entry name" value="Mechanosensitive_channel_CS"/>
</dbReference>
<dbReference type="InterPro" id="IPR001185">
    <property type="entry name" value="MS_channel"/>
</dbReference>
<dbReference type="InterPro" id="IPR037673">
    <property type="entry name" value="MSC/AndL"/>
</dbReference>
<dbReference type="InterPro" id="IPR036019">
    <property type="entry name" value="MscL_channel"/>
</dbReference>
<dbReference type="NCBIfam" id="TIGR00220">
    <property type="entry name" value="mscL"/>
    <property type="match status" value="1"/>
</dbReference>
<dbReference type="NCBIfam" id="NF001843">
    <property type="entry name" value="PRK00567.1-4"/>
    <property type="match status" value="1"/>
</dbReference>
<dbReference type="PANTHER" id="PTHR30266:SF2">
    <property type="entry name" value="LARGE-CONDUCTANCE MECHANOSENSITIVE CHANNEL"/>
    <property type="match status" value="1"/>
</dbReference>
<dbReference type="PANTHER" id="PTHR30266">
    <property type="entry name" value="MECHANOSENSITIVE CHANNEL MSCL"/>
    <property type="match status" value="1"/>
</dbReference>
<dbReference type="Pfam" id="PF01741">
    <property type="entry name" value="MscL"/>
    <property type="match status" value="1"/>
</dbReference>
<dbReference type="PRINTS" id="PR01264">
    <property type="entry name" value="MECHCHANNEL"/>
</dbReference>
<dbReference type="SUPFAM" id="SSF81330">
    <property type="entry name" value="Gated mechanosensitive channel"/>
    <property type="match status" value="1"/>
</dbReference>
<dbReference type="PROSITE" id="PS01327">
    <property type="entry name" value="MSCL"/>
    <property type="match status" value="1"/>
</dbReference>
<keyword id="KW-1003">Cell membrane</keyword>
<keyword id="KW-0407">Ion channel</keyword>
<keyword id="KW-0406">Ion transport</keyword>
<keyword id="KW-0472">Membrane</keyword>
<keyword id="KW-0812">Transmembrane</keyword>
<keyword id="KW-1133">Transmembrane helix</keyword>
<keyword id="KW-0813">Transport</keyword>
<gene>
    <name evidence="1" type="primary">mscL</name>
    <name type="ordered locus">EAT1b_1294</name>
</gene>
<name>MSCL_EXISA</name>
<sequence length="126" mass="14022">MWKEFKKFAMRGNVIDLAVAVVLGAAFTAIVNSLVNDIFMPLLGIIIGGIDFSSLKASILGVDVLYGNFIQQIVSFFLIAIALFLIVKVINRLQREKEVEEAAIPTPTKEEQLLTEIRDLLKDRSL</sequence>
<proteinExistence type="inferred from homology"/>
<protein>
    <recommendedName>
        <fullName evidence="1">Large-conductance mechanosensitive channel</fullName>
    </recommendedName>
</protein>
<feature type="chain" id="PRO_1000202974" description="Large-conductance mechanosensitive channel">
    <location>
        <begin position="1"/>
        <end position="126"/>
    </location>
</feature>
<feature type="transmembrane region" description="Helical" evidence="1">
    <location>
        <begin position="8"/>
        <end position="28"/>
    </location>
</feature>
<feature type="transmembrane region" description="Helical" evidence="1">
    <location>
        <begin position="70"/>
        <end position="90"/>
    </location>
</feature>